<accession>Q92MG0</accession>
<gene>
    <name type="primary">hisC1</name>
    <name type="ordered locus">R02662</name>
    <name type="ORF">SMc00710</name>
</gene>
<comment type="catalytic activity">
    <reaction>
        <text>L-histidinol phosphate + 2-oxoglutarate = 3-(imidazol-4-yl)-2-oxopropyl phosphate + L-glutamate</text>
        <dbReference type="Rhea" id="RHEA:23744"/>
        <dbReference type="ChEBI" id="CHEBI:16810"/>
        <dbReference type="ChEBI" id="CHEBI:29985"/>
        <dbReference type="ChEBI" id="CHEBI:57766"/>
        <dbReference type="ChEBI" id="CHEBI:57980"/>
        <dbReference type="EC" id="2.6.1.9"/>
    </reaction>
</comment>
<comment type="cofactor">
    <cofactor evidence="1">
        <name>pyridoxal 5'-phosphate</name>
        <dbReference type="ChEBI" id="CHEBI:597326"/>
    </cofactor>
</comment>
<comment type="pathway">
    <text>Amino-acid biosynthesis; L-histidine biosynthesis; L-histidine from 5-phospho-alpha-D-ribose 1-diphosphate: step 7/9.</text>
</comment>
<comment type="subunit">
    <text evidence="1">Homodimer.</text>
</comment>
<comment type="similarity">
    <text evidence="2">Belongs to the class-II pyridoxal-phosphate-dependent aminotransferase family. Histidinol-phosphate aminotransferase subfamily.</text>
</comment>
<dbReference type="EC" id="2.6.1.9"/>
<dbReference type="EMBL" id="AL591688">
    <property type="protein sequence ID" value="CAC47241.1"/>
    <property type="molecule type" value="Genomic_DNA"/>
</dbReference>
<dbReference type="RefSeq" id="NP_386768.1">
    <property type="nucleotide sequence ID" value="NC_003047.1"/>
</dbReference>
<dbReference type="RefSeq" id="WP_010970110.1">
    <property type="nucleotide sequence ID" value="NC_003047.1"/>
</dbReference>
<dbReference type="SMR" id="Q92MG0"/>
<dbReference type="EnsemblBacteria" id="CAC47241">
    <property type="protein sequence ID" value="CAC47241"/>
    <property type="gene ID" value="SMc00710"/>
</dbReference>
<dbReference type="KEGG" id="sme:SMc00710"/>
<dbReference type="PATRIC" id="fig|266834.11.peg.4162"/>
<dbReference type="eggNOG" id="COG0079">
    <property type="taxonomic scope" value="Bacteria"/>
</dbReference>
<dbReference type="HOGENOM" id="CLU_017584_3_3_5"/>
<dbReference type="OrthoDB" id="9809616at2"/>
<dbReference type="UniPathway" id="UPA00031">
    <property type="reaction ID" value="UER00012"/>
</dbReference>
<dbReference type="Proteomes" id="UP000001976">
    <property type="component" value="Chromosome"/>
</dbReference>
<dbReference type="GO" id="GO:0004400">
    <property type="term" value="F:histidinol-phosphate transaminase activity"/>
    <property type="evidence" value="ECO:0007669"/>
    <property type="project" value="UniProtKB-UniRule"/>
</dbReference>
<dbReference type="GO" id="GO:0030170">
    <property type="term" value="F:pyridoxal phosphate binding"/>
    <property type="evidence" value="ECO:0007669"/>
    <property type="project" value="InterPro"/>
</dbReference>
<dbReference type="GO" id="GO:0000105">
    <property type="term" value="P:L-histidine biosynthetic process"/>
    <property type="evidence" value="ECO:0007669"/>
    <property type="project" value="UniProtKB-UniRule"/>
</dbReference>
<dbReference type="CDD" id="cd00609">
    <property type="entry name" value="AAT_like"/>
    <property type="match status" value="1"/>
</dbReference>
<dbReference type="Gene3D" id="3.90.1150.10">
    <property type="entry name" value="Aspartate Aminotransferase, domain 1"/>
    <property type="match status" value="1"/>
</dbReference>
<dbReference type="Gene3D" id="3.40.640.10">
    <property type="entry name" value="Type I PLP-dependent aspartate aminotransferase-like (Major domain)"/>
    <property type="match status" value="1"/>
</dbReference>
<dbReference type="HAMAP" id="MF_01023">
    <property type="entry name" value="HisC_aminotrans_2"/>
    <property type="match status" value="1"/>
</dbReference>
<dbReference type="InterPro" id="IPR004839">
    <property type="entry name" value="Aminotransferase_I/II_large"/>
</dbReference>
<dbReference type="InterPro" id="IPR005861">
    <property type="entry name" value="HisP_aminotrans"/>
</dbReference>
<dbReference type="InterPro" id="IPR050106">
    <property type="entry name" value="HistidinolP_aminotransfase"/>
</dbReference>
<dbReference type="InterPro" id="IPR015424">
    <property type="entry name" value="PyrdxlP-dep_Trfase"/>
</dbReference>
<dbReference type="InterPro" id="IPR015421">
    <property type="entry name" value="PyrdxlP-dep_Trfase_major"/>
</dbReference>
<dbReference type="InterPro" id="IPR015422">
    <property type="entry name" value="PyrdxlP-dep_Trfase_small"/>
</dbReference>
<dbReference type="NCBIfam" id="TIGR01141">
    <property type="entry name" value="hisC"/>
    <property type="match status" value="1"/>
</dbReference>
<dbReference type="PANTHER" id="PTHR43643:SF3">
    <property type="entry name" value="HISTIDINOL-PHOSPHATE AMINOTRANSFERASE"/>
    <property type="match status" value="1"/>
</dbReference>
<dbReference type="PANTHER" id="PTHR43643">
    <property type="entry name" value="HISTIDINOL-PHOSPHATE AMINOTRANSFERASE 2"/>
    <property type="match status" value="1"/>
</dbReference>
<dbReference type="Pfam" id="PF00155">
    <property type="entry name" value="Aminotran_1_2"/>
    <property type="match status" value="1"/>
</dbReference>
<dbReference type="SUPFAM" id="SSF53383">
    <property type="entry name" value="PLP-dependent transferases"/>
    <property type="match status" value="1"/>
</dbReference>
<organism>
    <name type="scientific">Rhizobium meliloti (strain 1021)</name>
    <name type="common">Ensifer meliloti</name>
    <name type="synonym">Sinorhizobium meliloti</name>
    <dbReference type="NCBI Taxonomy" id="266834"/>
    <lineage>
        <taxon>Bacteria</taxon>
        <taxon>Pseudomonadati</taxon>
        <taxon>Pseudomonadota</taxon>
        <taxon>Alphaproteobacteria</taxon>
        <taxon>Hyphomicrobiales</taxon>
        <taxon>Rhizobiaceae</taxon>
        <taxon>Sinorhizobium/Ensifer group</taxon>
        <taxon>Sinorhizobium</taxon>
    </lineage>
</organism>
<feature type="chain" id="PRO_0000153435" description="Histidinol-phosphate aminotransferase 1">
    <location>
        <begin position="1"/>
        <end position="368"/>
    </location>
</feature>
<feature type="modified residue" description="N6-(pyridoxal phosphate)lysine" evidence="1">
    <location>
        <position position="224"/>
    </location>
</feature>
<proteinExistence type="inferred from homology"/>
<keyword id="KW-0028">Amino-acid biosynthesis</keyword>
<keyword id="KW-0032">Aminotransferase</keyword>
<keyword id="KW-0368">Histidine biosynthesis</keyword>
<keyword id="KW-0663">Pyridoxal phosphate</keyword>
<keyword id="KW-1185">Reference proteome</keyword>
<keyword id="KW-0808">Transferase</keyword>
<sequence length="368" mass="39171">MNLALKSPAPRSGILDIAAYVPGKEHAPGVAKVHKLSSNETPLGASPRAIEAFQKAAFNLERYPDGQANALKEAIAAVHGLNPANILCGNGSDELLGLLCHTYLGPGDEGIVTEHGFLVYKIQITASGGTPVTVKERQERVDVDAILAAVTERTKIVFIANPANPTGTYIPVEEVRRLHAGLPAGVLLVLDAAYAEYVRRNDYEAGLELVSSNRNVVMTRTFSKIYGLAGLRIGWMYAPRDVVEALDRVRGPFNLNAAAIAAGAAAIRDQAFVAAAVDQNHTWLAKIGQALTDIGLRVTPSVTNFVLIHFPEEAGMSASDADAYLTSRGFILRAVGAYGFPNALRMTIGSEEANKGVVAALTEFMGRK</sequence>
<name>HIS81_RHIME</name>
<evidence type="ECO:0000250" key="1"/>
<evidence type="ECO:0000305" key="2"/>
<reference key="1">
    <citation type="journal article" date="2001" name="Proc. Natl. Acad. Sci. U.S.A.">
        <title>Analysis of the chromosome sequence of the legume symbiont Sinorhizobium meliloti strain 1021.</title>
        <authorList>
            <person name="Capela D."/>
            <person name="Barloy-Hubler F."/>
            <person name="Gouzy J."/>
            <person name="Bothe G."/>
            <person name="Ampe F."/>
            <person name="Batut J."/>
            <person name="Boistard P."/>
            <person name="Becker A."/>
            <person name="Boutry M."/>
            <person name="Cadieu E."/>
            <person name="Dreano S."/>
            <person name="Gloux S."/>
            <person name="Godrie T."/>
            <person name="Goffeau A."/>
            <person name="Kahn D."/>
            <person name="Kiss E."/>
            <person name="Lelaure V."/>
            <person name="Masuy D."/>
            <person name="Pohl T."/>
            <person name="Portetelle D."/>
            <person name="Puehler A."/>
            <person name="Purnelle B."/>
            <person name="Ramsperger U."/>
            <person name="Renard C."/>
            <person name="Thebault P."/>
            <person name="Vandenbol M."/>
            <person name="Weidner S."/>
            <person name="Galibert F."/>
        </authorList>
    </citation>
    <scope>NUCLEOTIDE SEQUENCE [LARGE SCALE GENOMIC DNA]</scope>
    <source>
        <strain>1021</strain>
    </source>
</reference>
<reference key="2">
    <citation type="journal article" date="2001" name="Science">
        <title>The composite genome of the legume symbiont Sinorhizobium meliloti.</title>
        <authorList>
            <person name="Galibert F."/>
            <person name="Finan T.M."/>
            <person name="Long S.R."/>
            <person name="Puehler A."/>
            <person name="Abola P."/>
            <person name="Ampe F."/>
            <person name="Barloy-Hubler F."/>
            <person name="Barnett M.J."/>
            <person name="Becker A."/>
            <person name="Boistard P."/>
            <person name="Bothe G."/>
            <person name="Boutry M."/>
            <person name="Bowser L."/>
            <person name="Buhrmester J."/>
            <person name="Cadieu E."/>
            <person name="Capela D."/>
            <person name="Chain P."/>
            <person name="Cowie A."/>
            <person name="Davis R.W."/>
            <person name="Dreano S."/>
            <person name="Federspiel N.A."/>
            <person name="Fisher R.F."/>
            <person name="Gloux S."/>
            <person name="Godrie T."/>
            <person name="Goffeau A."/>
            <person name="Golding B."/>
            <person name="Gouzy J."/>
            <person name="Gurjal M."/>
            <person name="Hernandez-Lucas I."/>
            <person name="Hong A."/>
            <person name="Huizar L."/>
            <person name="Hyman R.W."/>
            <person name="Jones T."/>
            <person name="Kahn D."/>
            <person name="Kahn M.L."/>
            <person name="Kalman S."/>
            <person name="Keating D.H."/>
            <person name="Kiss E."/>
            <person name="Komp C."/>
            <person name="Lelaure V."/>
            <person name="Masuy D."/>
            <person name="Palm C."/>
            <person name="Peck M.C."/>
            <person name="Pohl T.M."/>
            <person name="Portetelle D."/>
            <person name="Purnelle B."/>
            <person name="Ramsperger U."/>
            <person name="Surzycki R."/>
            <person name="Thebault P."/>
            <person name="Vandenbol M."/>
            <person name="Vorhoelter F.J."/>
            <person name="Weidner S."/>
            <person name="Wells D.H."/>
            <person name="Wong K."/>
            <person name="Yeh K.-C."/>
            <person name="Batut J."/>
        </authorList>
    </citation>
    <scope>NUCLEOTIDE SEQUENCE [LARGE SCALE GENOMIC DNA]</scope>
    <source>
        <strain>1021</strain>
    </source>
</reference>
<protein>
    <recommendedName>
        <fullName>Histidinol-phosphate aminotransferase 1</fullName>
        <ecNumber>2.6.1.9</ecNumber>
    </recommendedName>
    <alternativeName>
        <fullName>Imidazole acetol-phosphate transaminase 1</fullName>
    </alternativeName>
</protein>